<evidence type="ECO:0000255" key="1">
    <source>
        <dbReference type="HAMAP-Rule" id="MF_00120"/>
    </source>
</evidence>
<protein>
    <recommendedName>
        <fullName evidence="1">Glutamyl-tRNA(Gln) amidotransferase subunit A</fullName>
        <shortName evidence="1">Glu-ADT subunit A</shortName>
        <ecNumber evidence="1">6.3.5.7</ecNumber>
    </recommendedName>
</protein>
<sequence length="492" mass="53012">MTDLHRLSIRELAEGLSQAKFSSRELTEHYLKRIAKIDPQVKSYVTVTPEQALREADAADAALKAGNATALTGIPLAHKDIFCTKGIKTTAGSKMLDNFISPYDATVVEKTKAAGLVTLGKVNMDEFAMGSTSESSYVGATSNPWALDHVPGGSSGGSAAAVAADLAPFATGTDTGGSIRQPASFCGLTGLKPTYGRVSRFGIIAYASSLDQAGPMARSAEDCAYLMNVIAGHDAKDSTSVKKEVDDYVANLNNTSVKGLRIGIPKQYFNVAGLDADVKARVEESLKKLEEMGAALVEIDLNMTEAYVPTYYLIAPAEASSNLSRYDGVRYGYRCENPADLMDLYKRSRSEGFGPEVQRRILIGTYALSAGYYDAYYVKAQKVRRLIQQDFLKAFENVDVIAAPAAPTTAYKIGASLDPVEMYLGDIYTIAVNLAGLPAINAPVGFDKDNLPVGLQLIGNYWSESQLLSIVHQYQQNTDWHTKRAAIAEENA</sequence>
<name>GATA_ACIB3</name>
<keyword id="KW-0067">ATP-binding</keyword>
<keyword id="KW-0436">Ligase</keyword>
<keyword id="KW-0547">Nucleotide-binding</keyword>
<keyword id="KW-0648">Protein biosynthesis</keyword>
<gene>
    <name evidence="1" type="primary">gatA</name>
    <name type="ordered locus">ABBFA_000683</name>
</gene>
<dbReference type="EC" id="6.3.5.7" evidence="1"/>
<dbReference type="EMBL" id="CP001172">
    <property type="protein sequence ID" value="ACJ58558.1"/>
    <property type="molecule type" value="Genomic_DNA"/>
</dbReference>
<dbReference type="RefSeq" id="WP_000130658.1">
    <property type="nucleotide sequence ID" value="NZ_CP001172.1"/>
</dbReference>
<dbReference type="SMR" id="B7GXC5"/>
<dbReference type="HOGENOM" id="CLU_009600_0_3_6"/>
<dbReference type="Proteomes" id="UP000006924">
    <property type="component" value="Chromosome"/>
</dbReference>
<dbReference type="GO" id="GO:0030956">
    <property type="term" value="C:glutamyl-tRNA(Gln) amidotransferase complex"/>
    <property type="evidence" value="ECO:0007669"/>
    <property type="project" value="InterPro"/>
</dbReference>
<dbReference type="GO" id="GO:0005524">
    <property type="term" value="F:ATP binding"/>
    <property type="evidence" value="ECO:0007669"/>
    <property type="project" value="UniProtKB-KW"/>
</dbReference>
<dbReference type="GO" id="GO:0050567">
    <property type="term" value="F:glutaminyl-tRNA synthase (glutamine-hydrolyzing) activity"/>
    <property type="evidence" value="ECO:0007669"/>
    <property type="project" value="UniProtKB-UniRule"/>
</dbReference>
<dbReference type="GO" id="GO:0006412">
    <property type="term" value="P:translation"/>
    <property type="evidence" value="ECO:0007669"/>
    <property type="project" value="UniProtKB-UniRule"/>
</dbReference>
<dbReference type="Gene3D" id="3.90.1300.10">
    <property type="entry name" value="Amidase signature (AS) domain"/>
    <property type="match status" value="1"/>
</dbReference>
<dbReference type="HAMAP" id="MF_00120">
    <property type="entry name" value="GatA"/>
    <property type="match status" value="1"/>
</dbReference>
<dbReference type="InterPro" id="IPR000120">
    <property type="entry name" value="Amidase"/>
</dbReference>
<dbReference type="InterPro" id="IPR020556">
    <property type="entry name" value="Amidase_CS"/>
</dbReference>
<dbReference type="InterPro" id="IPR023631">
    <property type="entry name" value="Amidase_dom"/>
</dbReference>
<dbReference type="InterPro" id="IPR036928">
    <property type="entry name" value="AS_sf"/>
</dbReference>
<dbReference type="InterPro" id="IPR004412">
    <property type="entry name" value="GatA"/>
</dbReference>
<dbReference type="NCBIfam" id="TIGR00132">
    <property type="entry name" value="gatA"/>
    <property type="match status" value="1"/>
</dbReference>
<dbReference type="PANTHER" id="PTHR11895:SF151">
    <property type="entry name" value="GLUTAMYL-TRNA(GLN) AMIDOTRANSFERASE SUBUNIT A"/>
    <property type="match status" value="1"/>
</dbReference>
<dbReference type="PANTHER" id="PTHR11895">
    <property type="entry name" value="TRANSAMIDASE"/>
    <property type="match status" value="1"/>
</dbReference>
<dbReference type="Pfam" id="PF01425">
    <property type="entry name" value="Amidase"/>
    <property type="match status" value="1"/>
</dbReference>
<dbReference type="SUPFAM" id="SSF75304">
    <property type="entry name" value="Amidase signature (AS) enzymes"/>
    <property type="match status" value="1"/>
</dbReference>
<dbReference type="PROSITE" id="PS00571">
    <property type="entry name" value="AMIDASES"/>
    <property type="match status" value="1"/>
</dbReference>
<feature type="chain" id="PRO_1000117600" description="Glutamyl-tRNA(Gln) amidotransferase subunit A">
    <location>
        <begin position="1"/>
        <end position="492"/>
    </location>
</feature>
<feature type="active site" description="Charge relay system" evidence="1">
    <location>
        <position position="79"/>
    </location>
</feature>
<feature type="active site" description="Charge relay system" evidence="1">
    <location>
        <position position="154"/>
    </location>
</feature>
<feature type="active site" description="Acyl-ester intermediate" evidence="1">
    <location>
        <position position="178"/>
    </location>
</feature>
<organism>
    <name type="scientific">Acinetobacter baumannii (strain AB307-0294)</name>
    <dbReference type="NCBI Taxonomy" id="557600"/>
    <lineage>
        <taxon>Bacteria</taxon>
        <taxon>Pseudomonadati</taxon>
        <taxon>Pseudomonadota</taxon>
        <taxon>Gammaproteobacteria</taxon>
        <taxon>Moraxellales</taxon>
        <taxon>Moraxellaceae</taxon>
        <taxon>Acinetobacter</taxon>
        <taxon>Acinetobacter calcoaceticus/baumannii complex</taxon>
    </lineage>
</organism>
<proteinExistence type="inferred from homology"/>
<reference key="1">
    <citation type="journal article" date="2008" name="J. Bacteriol.">
        <title>Comparative genome sequence analysis of multidrug-resistant Acinetobacter baumannii.</title>
        <authorList>
            <person name="Adams M.D."/>
            <person name="Goglin K."/>
            <person name="Molyneaux N."/>
            <person name="Hujer K.M."/>
            <person name="Lavender H."/>
            <person name="Jamison J.J."/>
            <person name="MacDonald I.J."/>
            <person name="Martin K.M."/>
            <person name="Russo T."/>
            <person name="Campagnari A.A."/>
            <person name="Hujer A.M."/>
            <person name="Bonomo R.A."/>
            <person name="Gill S.R."/>
        </authorList>
    </citation>
    <scope>NUCLEOTIDE SEQUENCE [LARGE SCALE GENOMIC DNA]</scope>
    <source>
        <strain>AB307-0294</strain>
    </source>
</reference>
<accession>B7GXC5</accession>
<comment type="function">
    <text evidence="1">Allows the formation of correctly charged Gln-tRNA(Gln) through the transamidation of misacylated Glu-tRNA(Gln) in organisms which lack glutaminyl-tRNA synthetase. The reaction takes place in the presence of glutamine and ATP through an activated gamma-phospho-Glu-tRNA(Gln).</text>
</comment>
<comment type="catalytic activity">
    <reaction evidence="1">
        <text>L-glutamyl-tRNA(Gln) + L-glutamine + ATP + H2O = L-glutaminyl-tRNA(Gln) + L-glutamate + ADP + phosphate + H(+)</text>
        <dbReference type="Rhea" id="RHEA:17521"/>
        <dbReference type="Rhea" id="RHEA-COMP:9681"/>
        <dbReference type="Rhea" id="RHEA-COMP:9684"/>
        <dbReference type="ChEBI" id="CHEBI:15377"/>
        <dbReference type="ChEBI" id="CHEBI:15378"/>
        <dbReference type="ChEBI" id="CHEBI:29985"/>
        <dbReference type="ChEBI" id="CHEBI:30616"/>
        <dbReference type="ChEBI" id="CHEBI:43474"/>
        <dbReference type="ChEBI" id="CHEBI:58359"/>
        <dbReference type="ChEBI" id="CHEBI:78520"/>
        <dbReference type="ChEBI" id="CHEBI:78521"/>
        <dbReference type="ChEBI" id="CHEBI:456216"/>
        <dbReference type="EC" id="6.3.5.7"/>
    </reaction>
</comment>
<comment type="subunit">
    <text evidence="1">Heterotrimer of A, B and C subunits.</text>
</comment>
<comment type="similarity">
    <text evidence="1">Belongs to the amidase family. GatA subfamily.</text>
</comment>